<gene>
    <name evidence="1" type="primary">arsC2</name>
    <name type="ordered locus">SSPP114</name>
</gene>
<keyword id="KW-0059">Arsenical resistance</keyword>
<keyword id="KW-0963">Cytoplasm</keyword>
<keyword id="KW-1015">Disulfide bond</keyword>
<keyword id="KW-0560">Oxidoreductase</keyword>
<keyword id="KW-0614">Plasmid</keyword>
<keyword id="KW-0676">Redox-active center</keyword>
<keyword id="KW-1185">Reference proteome</keyword>
<accession>Q49UH1</accession>
<protein>
    <recommendedName>
        <fullName evidence="1">Arsenate reductase 2</fullName>
        <ecNumber evidence="1">1.20.4.4</ecNumber>
    </recommendedName>
</protein>
<evidence type="ECO:0000255" key="1">
    <source>
        <dbReference type="HAMAP-Rule" id="MF_01624"/>
    </source>
</evidence>
<geneLocation type="plasmid">
    <name>pSSP1</name>
</geneLocation>
<dbReference type="EC" id="1.20.4.4" evidence="1"/>
<dbReference type="EMBL" id="AP008935">
    <property type="protein sequence ID" value="BAE19605.1"/>
    <property type="molecule type" value="Genomic_DNA"/>
</dbReference>
<dbReference type="SMR" id="Q49UH1"/>
<dbReference type="KEGG" id="ssp:SSPP114"/>
<dbReference type="eggNOG" id="COG0394">
    <property type="taxonomic scope" value="Bacteria"/>
</dbReference>
<dbReference type="HOGENOM" id="CLU_071415_3_2_9"/>
<dbReference type="OrthoDB" id="9784339at2"/>
<dbReference type="Proteomes" id="UP000006371">
    <property type="component" value="Plasmid pSSP1"/>
</dbReference>
<dbReference type="GO" id="GO:0005737">
    <property type="term" value="C:cytoplasm"/>
    <property type="evidence" value="ECO:0007669"/>
    <property type="project" value="UniProtKB-SubCell"/>
</dbReference>
<dbReference type="GO" id="GO:0030612">
    <property type="term" value="F:arsenate reductase (thioredoxin) activity"/>
    <property type="evidence" value="ECO:0007669"/>
    <property type="project" value="UniProtKB-UniRule"/>
</dbReference>
<dbReference type="GO" id="GO:0004725">
    <property type="term" value="F:protein tyrosine phosphatase activity"/>
    <property type="evidence" value="ECO:0007669"/>
    <property type="project" value="InterPro"/>
</dbReference>
<dbReference type="GO" id="GO:0046685">
    <property type="term" value="P:response to arsenic-containing substance"/>
    <property type="evidence" value="ECO:0007669"/>
    <property type="project" value="UniProtKB-KW"/>
</dbReference>
<dbReference type="CDD" id="cd16345">
    <property type="entry name" value="LMWP_ArsC"/>
    <property type="match status" value="1"/>
</dbReference>
<dbReference type="FunFam" id="3.40.50.2300:FF:000237">
    <property type="entry name" value="Arsenate reductase"/>
    <property type="match status" value="1"/>
</dbReference>
<dbReference type="Gene3D" id="3.40.50.2300">
    <property type="match status" value="1"/>
</dbReference>
<dbReference type="HAMAP" id="MF_01624">
    <property type="entry name" value="Arsenate_reduct"/>
    <property type="match status" value="1"/>
</dbReference>
<dbReference type="InterPro" id="IPR014064">
    <property type="entry name" value="Arsenate_reductase_ArsC"/>
</dbReference>
<dbReference type="InterPro" id="IPR023485">
    <property type="entry name" value="Ptyr_pPase"/>
</dbReference>
<dbReference type="InterPro" id="IPR036196">
    <property type="entry name" value="Ptyr_pPase_sf"/>
</dbReference>
<dbReference type="NCBIfam" id="TIGR02691">
    <property type="entry name" value="arsC_pI258_fam"/>
    <property type="match status" value="1"/>
</dbReference>
<dbReference type="NCBIfam" id="NF010053">
    <property type="entry name" value="PRK13530.1"/>
    <property type="match status" value="1"/>
</dbReference>
<dbReference type="PANTHER" id="PTHR43428">
    <property type="entry name" value="ARSENATE REDUCTASE"/>
    <property type="match status" value="1"/>
</dbReference>
<dbReference type="PANTHER" id="PTHR43428:SF1">
    <property type="entry name" value="ARSENATE REDUCTASE"/>
    <property type="match status" value="1"/>
</dbReference>
<dbReference type="Pfam" id="PF01451">
    <property type="entry name" value="LMWPc"/>
    <property type="match status" value="1"/>
</dbReference>
<dbReference type="SMART" id="SM00226">
    <property type="entry name" value="LMWPc"/>
    <property type="match status" value="1"/>
</dbReference>
<dbReference type="SUPFAM" id="SSF52788">
    <property type="entry name" value="Phosphotyrosine protein phosphatases I"/>
    <property type="match status" value="1"/>
</dbReference>
<reference key="1">
    <citation type="journal article" date="2005" name="Proc. Natl. Acad. Sci. U.S.A.">
        <title>Whole genome sequence of Staphylococcus saprophyticus reveals the pathogenesis of uncomplicated urinary tract infection.</title>
        <authorList>
            <person name="Kuroda M."/>
            <person name="Yamashita A."/>
            <person name="Hirakawa H."/>
            <person name="Kumano M."/>
            <person name="Morikawa K."/>
            <person name="Higashide M."/>
            <person name="Maruyama A."/>
            <person name="Inose Y."/>
            <person name="Matoba K."/>
            <person name="Toh H."/>
            <person name="Kuhara S."/>
            <person name="Hattori M."/>
            <person name="Ohta T."/>
        </authorList>
    </citation>
    <scope>NUCLEOTIDE SEQUENCE [LARGE SCALE GENOMIC DNA]</scope>
    <source>
        <strain>ATCC 15305 / DSM 20229 / NCIMB 8711 / NCTC 7292 / S-41</strain>
    </source>
</reference>
<sequence length="131" mass="14908">MDKKTIYFICTGNSCRSQMAEGWGREILGEEWNVYSAGIETHGVNPKAIEAMKEVDIDISNHTSDLIDNKILRQSDLVVTLCSDADENCPVIPPNVKKEHWGFDDPAGKSWSEFQRVRDEIGQKIKQFYDN</sequence>
<organism>
    <name type="scientific">Staphylococcus saprophyticus subsp. saprophyticus (strain ATCC 15305 / DSM 20229 / NCIMB 8711 / NCTC 7292 / S-41)</name>
    <dbReference type="NCBI Taxonomy" id="342451"/>
    <lineage>
        <taxon>Bacteria</taxon>
        <taxon>Bacillati</taxon>
        <taxon>Bacillota</taxon>
        <taxon>Bacilli</taxon>
        <taxon>Bacillales</taxon>
        <taxon>Staphylococcaceae</taxon>
        <taxon>Staphylococcus</taxon>
    </lineage>
</organism>
<comment type="function">
    <text evidence="1">Catalyzes the reduction of arsenate [As(V)] to arsenite [As(III)].</text>
</comment>
<comment type="catalytic activity">
    <reaction evidence="1">
        <text>arsenate + [thioredoxin]-dithiol + H(+) = arsenite + [thioredoxin]-disulfide + H2O</text>
        <dbReference type="Rhea" id="RHEA:43848"/>
        <dbReference type="Rhea" id="RHEA-COMP:10698"/>
        <dbReference type="Rhea" id="RHEA-COMP:10700"/>
        <dbReference type="ChEBI" id="CHEBI:15377"/>
        <dbReference type="ChEBI" id="CHEBI:15378"/>
        <dbReference type="ChEBI" id="CHEBI:29242"/>
        <dbReference type="ChEBI" id="CHEBI:29950"/>
        <dbReference type="ChEBI" id="CHEBI:48597"/>
        <dbReference type="ChEBI" id="CHEBI:50058"/>
        <dbReference type="EC" id="1.20.4.4"/>
    </reaction>
</comment>
<comment type="subcellular location">
    <subcellularLocation>
        <location evidence="1">Cytoplasm</location>
    </subcellularLocation>
</comment>
<comment type="similarity">
    <text evidence="1">Belongs to the low molecular weight phosphotyrosine protein phosphatase family. Thioredoxin-coupled ArsC subfamily.</text>
</comment>
<feature type="chain" id="PRO_0000162533" description="Arsenate reductase 2">
    <location>
        <begin position="1"/>
        <end position="131"/>
    </location>
</feature>
<feature type="active site" description="Nucleophile" evidence="1">
    <location>
        <position position="10"/>
    </location>
</feature>
<feature type="active site" description="Nucleophile" evidence="1">
    <location>
        <position position="82"/>
    </location>
</feature>
<feature type="active site" description="Nucleophile" evidence="1">
    <location>
        <position position="89"/>
    </location>
</feature>
<feature type="disulfide bond" description="Redox-active; alternate" evidence="1">
    <location>
        <begin position="10"/>
        <end position="82"/>
    </location>
</feature>
<feature type="disulfide bond" description="Redox-active; alternate" evidence="1">
    <location>
        <begin position="82"/>
        <end position="89"/>
    </location>
</feature>
<proteinExistence type="inferred from homology"/>
<name>ARSC2_STAS1</name>